<evidence type="ECO:0000250" key="1"/>
<evidence type="ECO:0000255" key="2"/>
<evidence type="ECO:0000305" key="3"/>
<accession>P0AFE2</accession>
<accession>P33605</accession>
<accession>P78236</accession>
<keyword id="KW-0997">Cell inner membrane</keyword>
<keyword id="KW-1003">Cell membrane</keyword>
<keyword id="KW-0472">Membrane</keyword>
<keyword id="KW-0520">NAD</keyword>
<keyword id="KW-0874">Quinone</keyword>
<keyword id="KW-1185">Reference proteome</keyword>
<keyword id="KW-1278">Translocase</keyword>
<keyword id="KW-0812">Transmembrane</keyword>
<keyword id="KW-1133">Transmembrane helix</keyword>
<keyword id="KW-0830">Ubiquinone</keyword>
<organism>
    <name type="scientific">Escherichia coli O157:H7</name>
    <dbReference type="NCBI Taxonomy" id="83334"/>
    <lineage>
        <taxon>Bacteria</taxon>
        <taxon>Pseudomonadati</taxon>
        <taxon>Pseudomonadota</taxon>
        <taxon>Gammaproteobacteria</taxon>
        <taxon>Enterobacterales</taxon>
        <taxon>Enterobacteriaceae</taxon>
        <taxon>Escherichia</taxon>
    </lineage>
</organism>
<feature type="chain" id="PRO_0000118371" description="NADH-quinone oxidoreductase subunit J">
    <location>
        <begin position="1"/>
        <end position="184"/>
    </location>
</feature>
<feature type="transmembrane region" description="Helical" evidence="2">
    <location>
        <begin position="1"/>
        <end position="21"/>
    </location>
</feature>
<feature type="topological domain" description="Cytoplasmic" evidence="2">
    <location>
        <begin position="22"/>
        <end position="27"/>
    </location>
</feature>
<feature type="transmembrane region" description="Helical" evidence="2">
    <location>
        <begin position="28"/>
        <end position="48"/>
    </location>
</feature>
<feature type="topological domain" description="Periplasmic" evidence="2">
    <location>
        <begin position="49"/>
        <end position="53"/>
    </location>
</feature>
<feature type="transmembrane region" description="Helical" evidence="2">
    <location>
        <begin position="54"/>
        <end position="74"/>
    </location>
</feature>
<feature type="topological domain" description="Cytoplasmic" evidence="2">
    <location>
        <begin position="75"/>
        <end position="91"/>
    </location>
</feature>
<feature type="transmembrane region" description="Helical" evidence="2">
    <location>
        <begin position="92"/>
        <end position="112"/>
    </location>
</feature>
<feature type="topological domain" description="Periplasmic" evidence="2">
    <location>
        <begin position="113"/>
        <end position="137"/>
    </location>
</feature>
<feature type="transmembrane region" description="Helical" evidence="2">
    <location>
        <begin position="138"/>
        <end position="158"/>
    </location>
</feature>
<feature type="topological domain" description="Cytoplasmic" evidence="2">
    <location>
        <begin position="159"/>
        <end position="184"/>
    </location>
</feature>
<sequence>MEFAFYICGLIAILATLRVITHTNPVHALLYLIISLLAISGVFFSLGAYFAGALEIIVYAGAIMVLFVFVVMMLNLGGSEIEQERQWLKPQVWIGPAILSAIMLVVIVYAILGVNDQGIDGTPISAKAVGITLFGPYVLAVELASMLLLAGLVVAFHVGREERAGEVLSNRKDDSAKRKTEEHA</sequence>
<reference key="1">
    <citation type="journal article" date="2001" name="Nature">
        <title>Genome sequence of enterohaemorrhagic Escherichia coli O157:H7.</title>
        <authorList>
            <person name="Perna N.T."/>
            <person name="Plunkett G. III"/>
            <person name="Burland V."/>
            <person name="Mau B."/>
            <person name="Glasner J.D."/>
            <person name="Rose D.J."/>
            <person name="Mayhew G.F."/>
            <person name="Evans P.S."/>
            <person name="Gregor J."/>
            <person name="Kirkpatrick H.A."/>
            <person name="Posfai G."/>
            <person name="Hackett J."/>
            <person name="Klink S."/>
            <person name="Boutin A."/>
            <person name="Shao Y."/>
            <person name="Miller L."/>
            <person name="Grotbeck E.J."/>
            <person name="Davis N.W."/>
            <person name="Lim A."/>
            <person name="Dimalanta E.T."/>
            <person name="Potamousis K."/>
            <person name="Apodaca J."/>
            <person name="Anantharaman T.S."/>
            <person name="Lin J."/>
            <person name="Yen G."/>
            <person name="Schwartz D.C."/>
            <person name="Welch R.A."/>
            <person name="Blattner F.R."/>
        </authorList>
    </citation>
    <scope>NUCLEOTIDE SEQUENCE [LARGE SCALE GENOMIC DNA]</scope>
    <source>
        <strain>O157:H7 / EDL933 / ATCC 700927 / EHEC</strain>
    </source>
</reference>
<reference key="2">
    <citation type="journal article" date="2001" name="DNA Res.">
        <title>Complete genome sequence of enterohemorrhagic Escherichia coli O157:H7 and genomic comparison with a laboratory strain K-12.</title>
        <authorList>
            <person name="Hayashi T."/>
            <person name="Makino K."/>
            <person name="Ohnishi M."/>
            <person name="Kurokawa K."/>
            <person name="Ishii K."/>
            <person name="Yokoyama K."/>
            <person name="Han C.-G."/>
            <person name="Ohtsubo E."/>
            <person name="Nakayama K."/>
            <person name="Murata T."/>
            <person name="Tanaka M."/>
            <person name="Tobe T."/>
            <person name="Iida T."/>
            <person name="Takami H."/>
            <person name="Honda T."/>
            <person name="Sasakawa C."/>
            <person name="Ogasawara N."/>
            <person name="Yasunaga T."/>
            <person name="Kuhara S."/>
            <person name="Shiba T."/>
            <person name="Hattori M."/>
            <person name="Shinagawa H."/>
        </authorList>
    </citation>
    <scope>NUCLEOTIDE SEQUENCE [LARGE SCALE GENOMIC DNA]</scope>
    <source>
        <strain>O157:H7 / Sakai / RIMD 0509952 / EHEC</strain>
    </source>
</reference>
<protein>
    <recommendedName>
        <fullName>NADH-quinone oxidoreductase subunit J</fullName>
        <ecNumber>7.1.1.-</ecNumber>
    </recommendedName>
    <alternativeName>
        <fullName>NADH dehydrogenase I subunit J</fullName>
    </alternativeName>
    <alternativeName>
        <fullName>NDH-1 subunit J</fullName>
    </alternativeName>
    <alternativeName>
        <fullName>NUO10</fullName>
    </alternativeName>
</protein>
<dbReference type="EC" id="7.1.1.-"/>
<dbReference type="EMBL" id="AE005174">
    <property type="protein sequence ID" value="AAG57409.1"/>
    <property type="molecule type" value="Genomic_DNA"/>
</dbReference>
<dbReference type="EMBL" id="BA000007">
    <property type="protein sequence ID" value="BAB36587.1"/>
    <property type="molecule type" value="Genomic_DNA"/>
</dbReference>
<dbReference type="PIR" id="D91024">
    <property type="entry name" value="D91024"/>
</dbReference>
<dbReference type="PIR" id="E85868">
    <property type="entry name" value="E85868"/>
</dbReference>
<dbReference type="RefSeq" id="NP_311191.1">
    <property type="nucleotide sequence ID" value="NC_002695.1"/>
</dbReference>
<dbReference type="RefSeq" id="WP_000393511.1">
    <property type="nucleotide sequence ID" value="NZ_VOAI01000001.1"/>
</dbReference>
<dbReference type="SMR" id="P0AFE2"/>
<dbReference type="STRING" id="155864.Z3539"/>
<dbReference type="GeneID" id="916872"/>
<dbReference type="GeneID" id="93774894"/>
<dbReference type="KEGG" id="ece:Z3539"/>
<dbReference type="KEGG" id="ecs:ECs_3164"/>
<dbReference type="PATRIC" id="fig|386585.9.peg.3302"/>
<dbReference type="eggNOG" id="COG0839">
    <property type="taxonomic scope" value="Bacteria"/>
</dbReference>
<dbReference type="HOGENOM" id="CLU_085957_0_1_6"/>
<dbReference type="OMA" id="AVQFWIL"/>
<dbReference type="Proteomes" id="UP000000558">
    <property type="component" value="Chromosome"/>
</dbReference>
<dbReference type="Proteomes" id="UP000002519">
    <property type="component" value="Chromosome"/>
</dbReference>
<dbReference type="GO" id="GO:0005886">
    <property type="term" value="C:plasma membrane"/>
    <property type="evidence" value="ECO:0007669"/>
    <property type="project" value="UniProtKB-SubCell"/>
</dbReference>
<dbReference type="GO" id="GO:0008137">
    <property type="term" value="F:NADH dehydrogenase (ubiquinone) activity"/>
    <property type="evidence" value="ECO:0007669"/>
    <property type="project" value="InterPro"/>
</dbReference>
<dbReference type="GO" id="GO:0048038">
    <property type="term" value="F:quinone binding"/>
    <property type="evidence" value="ECO:0007669"/>
    <property type="project" value="UniProtKB-KW"/>
</dbReference>
<dbReference type="FunFam" id="1.20.120.1200:FF:000001">
    <property type="entry name" value="NADH-quinone oxidoreductase subunit J"/>
    <property type="match status" value="1"/>
</dbReference>
<dbReference type="Gene3D" id="1.20.120.1200">
    <property type="entry name" value="NADH-ubiquinone/plastoquinone oxidoreductase chain 6, subunit NuoJ"/>
    <property type="match status" value="1"/>
</dbReference>
<dbReference type="InterPro" id="IPR001457">
    <property type="entry name" value="NADH_UbQ/plastoQ_OxRdtase_su6"/>
</dbReference>
<dbReference type="InterPro" id="IPR042106">
    <property type="entry name" value="Nuo/plastoQ_OxRdtase_6_NuoJ"/>
</dbReference>
<dbReference type="NCBIfam" id="NF005162">
    <property type="entry name" value="PRK06638.1-1"/>
    <property type="match status" value="1"/>
</dbReference>
<dbReference type="PANTHER" id="PTHR33269">
    <property type="entry name" value="NADH-UBIQUINONE OXIDOREDUCTASE CHAIN 6"/>
    <property type="match status" value="1"/>
</dbReference>
<dbReference type="PANTHER" id="PTHR33269:SF17">
    <property type="entry name" value="NADH-UBIQUINONE OXIDOREDUCTASE CHAIN 6"/>
    <property type="match status" value="1"/>
</dbReference>
<dbReference type="Pfam" id="PF00499">
    <property type="entry name" value="Oxidored_q3"/>
    <property type="match status" value="1"/>
</dbReference>
<gene>
    <name type="primary">nuoJ</name>
    <name type="ordered locus">Z3539</name>
    <name type="ordered locus">ECs3164</name>
</gene>
<name>NUOJ_ECO57</name>
<comment type="function">
    <text evidence="1">NDH-1 shuttles electrons from NADH, via FMN and iron-sulfur (Fe-S) centers, to quinones in the respiratory chain. The immediate electron acceptor for the enzyme in this species is believed to be ubiquinone. Couples the redox reaction to proton translocation (for every two electrons transferred, four hydrogen ions are translocated across the cytoplasmic membrane), and thus conserves the redox energy in a proton gradient (By similarity).</text>
</comment>
<comment type="catalytic activity">
    <reaction>
        <text>a quinone + NADH + 5 H(+)(in) = a quinol + NAD(+) + 4 H(+)(out)</text>
        <dbReference type="Rhea" id="RHEA:57888"/>
        <dbReference type="ChEBI" id="CHEBI:15378"/>
        <dbReference type="ChEBI" id="CHEBI:24646"/>
        <dbReference type="ChEBI" id="CHEBI:57540"/>
        <dbReference type="ChEBI" id="CHEBI:57945"/>
        <dbReference type="ChEBI" id="CHEBI:132124"/>
    </reaction>
</comment>
<comment type="subunit">
    <text evidence="1">Composed of 13 different subunits. Subunits NuoA, H, J, K, L, M, N constitute the membrane sector of the complex (By similarity).</text>
</comment>
<comment type="subcellular location">
    <subcellularLocation>
        <location evidence="1">Cell inner membrane</location>
        <topology evidence="1">Multi-pass membrane protein</topology>
    </subcellularLocation>
</comment>
<comment type="similarity">
    <text evidence="3">Belongs to the complex I subunit 6 family.</text>
</comment>
<proteinExistence type="inferred from homology"/>